<sequence length="263" mass="29622">MARGPKKHLKRVAAPKHWMLDKLTGVFAPRPSTGPHKLRECLPLIIFLRNRLKYALTGDEVKKICMQRFIKIDGKVRTDITYPAGFMDVISIEKTGEHFRLVYDTKGRFAVHRITAEEAKYKLCKVRKTWVGTKGIPHLVTHDARTIRYPDPLIKVNDTIQIDLETGKITDFIKFDTGNLCMVTGGANLGRIGVITNRERHPGSFDVVHVKDANGNSFATRLSNIFVIGKGNKPWISLPRGKGIRLTIAEERDKRLAAKQSSG</sequence>
<accession>Q6PBC4</accession>
<accession>Q28HL4</accession>
<name>RS4_XENTR</name>
<dbReference type="EMBL" id="CR760832">
    <property type="protein sequence ID" value="CAJ83152.1"/>
    <property type="molecule type" value="mRNA"/>
</dbReference>
<dbReference type="EMBL" id="BC059771">
    <property type="protein sequence ID" value="AAH59771.1"/>
    <property type="molecule type" value="mRNA"/>
</dbReference>
<dbReference type="EMBL" id="BC077671">
    <property type="protein sequence ID" value="AAH77671.1"/>
    <property type="molecule type" value="mRNA"/>
</dbReference>
<dbReference type="RefSeq" id="NP_988912.1">
    <property type="nucleotide sequence ID" value="NM_203581.3"/>
</dbReference>
<dbReference type="RefSeq" id="XP_012823602.1">
    <property type="nucleotide sequence ID" value="XM_012968148.1"/>
</dbReference>
<dbReference type="SMR" id="Q6PBC4"/>
<dbReference type="FunCoup" id="Q6PBC4">
    <property type="interactions" value="1441"/>
</dbReference>
<dbReference type="IntAct" id="Q6PBC4">
    <property type="interactions" value="2"/>
</dbReference>
<dbReference type="MINT" id="Q6PBC4"/>
<dbReference type="STRING" id="8364.ENSXETP00000027056"/>
<dbReference type="PaxDb" id="8364-ENSXETP00000056755"/>
<dbReference type="DNASU" id="394507"/>
<dbReference type="GeneID" id="394507"/>
<dbReference type="KEGG" id="xtr:394507"/>
<dbReference type="AGR" id="Xenbase:XB-GENE-967201"/>
<dbReference type="CTD" id="6191"/>
<dbReference type="Xenbase" id="XB-GENE-967201">
    <property type="gene designation" value="rps4x"/>
</dbReference>
<dbReference type="eggNOG" id="KOG0378">
    <property type="taxonomic scope" value="Eukaryota"/>
</dbReference>
<dbReference type="HOGENOM" id="CLU_060400_1_0_1"/>
<dbReference type="InParanoid" id="Q6PBC4"/>
<dbReference type="OMA" id="GHIQLNL"/>
<dbReference type="OrthoDB" id="1109245at2759"/>
<dbReference type="PhylomeDB" id="Q6PBC4"/>
<dbReference type="TreeFam" id="TF300612"/>
<dbReference type="Reactome" id="R-XTR-156827">
    <property type="pathway name" value="L13a-mediated translational silencing of Ceruloplasmin expression"/>
</dbReference>
<dbReference type="Reactome" id="R-XTR-1799339">
    <property type="pathway name" value="SRP-dependent cotranslational protein targeting to membrane"/>
</dbReference>
<dbReference type="Reactome" id="R-XTR-72689">
    <property type="pathway name" value="Formation of a pool of free 40S subunits"/>
</dbReference>
<dbReference type="Reactome" id="R-XTR-72695">
    <property type="pathway name" value="Formation of the ternary complex, and subsequently, the 43S complex"/>
</dbReference>
<dbReference type="Reactome" id="R-XTR-72702">
    <property type="pathway name" value="Ribosomal scanning and start codon recognition"/>
</dbReference>
<dbReference type="Reactome" id="R-XTR-72706">
    <property type="pathway name" value="GTP hydrolysis and joining of the 60S ribosomal subunit"/>
</dbReference>
<dbReference type="Reactome" id="R-XTR-975956">
    <property type="pathway name" value="Nonsense Mediated Decay (NMD) independent of the Exon Junction Complex (EJC)"/>
</dbReference>
<dbReference type="Reactome" id="R-XTR-975957">
    <property type="pathway name" value="Nonsense Mediated Decay (NMD) enhanced by the Exon Junction Complex (EJC)"/>
</dbReference>
<dbReference type="Proteomes" id="UP000008143">
    <property type="component" value="Chromosome 8"/>
</dbReference>
<dbReference type="Bgee" id="ENSXETG00000027073">
    <property type="expression patterns" value="Expressed in skeletal muscle tissue and 32 other cell types or tissues"/>
</dbReference>
<dbReference type="GO" id="GO:0005737">
    <property type="term" value="C:cytoplasm"/>
    <property type="evidence" value="ECO:0007669"/>
    <property type="project" value="UniProtKB-SubCell"/>
</dbReference>
<dbReference type="GO" id="GO:1990904">
    <property type="term" value="C:ribonucleoprotein complex"/>
    <property type="evidence" value="ECO:0007669"/>
    <property type="project" value="UniProtKB-KW"/>
</dbReference>
<dbReference type="GO" id="GO:0005840">
    <property type="term" value="C:ribosome"/>
    <property type="evidence" value="ECO:0007669"/>
    <property type="project" value="UniProtKB-KW"/>
</dbReference>
<dbReference type="GO" id="GO:0019843">
    <property type="term" value="F:rRNA binding"/>
    <property type="evidence" value="ECO:0007669"/>
    <property type="project" value="UniProtKB-KW"/>
</dbReference>
<dbReference type="GO" id="GO:0003735">
    <property type="term" value="F:structural constituent of ribosome"/>
    <property type="evidence" value="ECO:0007669"/>
    <property type="project" value="InterPro"/>
</dbReference>
<dbReference type="GO" id="GO:0006412">
    <property type="term" value="P:translation"/>
    <property type="evidence" value="ECO:0007669"/>
    <property type="project" value="InterPro"/>
</dbReference>
<dbReference type="CDD" id="cd06087">
    <property type="entry name" value="KOW_RPS4"/>
    <property type="match status" value="1"/>
</dbReference>
<dbReference type="CDD" id="cd00165">
    <property type="entry name" value="S4"/>
    <property type="match status" value="1"/>
</dbReference>
<dbReference type="FunFam" id="2.30.30.30:FF:000005">
    <property type="entry name" value="40S ribosomal protein S4"/>
    <property type="match status" value="1"/>
</dbReference>
<dbReference type="FunFam" id="2.40.50.740:FF:000001">
    <property type="entry name" value="40S ribosomal protein S4"/>
    <property type="match status" value="1"/>
</dbReference>
<dbReference type="FunFam" id="3.10.290.10:FF:000051">
    <property type="entry name" value="40S ribosomal protein S4, X isoform"/>
    <property type="match status" value="1"/>
</dbReference>
<dbReference type="Gene3D" id="2.30.30.30">
    <property type="match status" value="1"/>
</dbReference>
<dbReference type="Gene3D" id="2.40.50.740">
    <property type="match status" value="1"/>
</dbReference>
<dbReference type="Gene3D" id="3.10.290.10">
    <property type="entry name" value="RNA-binding S4 domain"/>
    <property type="match status" value="1"/>
</dbReference>
<dbReference type="HAMAP" id="MF_00485">
    <property type="entry name" value="Ribosomal_eS4"/>
    <property type="match status" value="1"/>
</dbReference>
<dbReference type="InterPro" id="IPR005824">
    <property type="entry name" value="KOW"/>
</dbReference>
<dbReference type="InterPro" id="IPR014722">
    <property type="entry name" value="Rib_uL2_dom2"/>
</dbReference>
<dbReference type="InterPro" id="IPR000876">
    <property type="entry name" value="Ribosomal_eS4"/>
</dbReference>
<dbReference type="InterPro" id="IPR032277">
    <property type="entry name" value="Ribosomal_eS4_C"/>
</dbReference>
<dbReference type="InterPro" id="IPR013845">
    <property type="entry name" value="Ribosomal_eS4_central_region"/>
</dbReference>
<dbReference type="InterPro" id="IPR038237">
    <property type="entry name" value="Ribosomal_eS4_central_sf"/>
</dbReference>
<dbReference type="InterPro" id="IPR041982">
    <property type="entry name" value="Ribosomal_eS4_KOW"/>
</dbReference>
<dbReference type="InterPro" id="IPR013843">
    <property type="entry name" value="Ribosomal_eS4_N"/>
</dbReference>
<dbReference type="InterPro" id="IPR018199">
    <property type="entry name" value="Ribosomal_eS4_N_CS"/>
</dbReference>
<dbReference type="InterPro" id="IPR002942">
    <property type="entry name" value="S4_RNA-bd"/>
</dbReference>
<dbReference type="InterPro" id="IPR036986">
    <property type="entry name" value="S4_RNA-bd_sf"/>
</dbReference>
<dbReference type="PANTHER" id="PTHR11581">
    <property type="entry name" value="30S/40S RIBOSOMAL PROTEIN S4"/>
    <property type="match status" value="1"/>
</dbReference>
<dbReference type="PANTHER" id="PTHR11581:SF0">
    <property type="entry name" value="SMALL RIBOSOMAL SUBUNIT PROTEIN ES4"/>
    <property type="match status" value="1"/>
</dbReference>
<dbReference type="Pfam" id="PF16121">
    <property type="entry name" value="40S_S4_C"/>
    <property type="match status" value="1"/>
</dbReference>
<dbReference type="Pfam" id="PF00467">
    <property type="entry name" value="KOW"/>
    <property type="match status" value="1"/>
</dbReference>
<dbReference type="Pfam" id="PF00900">
    <property type="entry name" value="Ribosomal_S4e"/>
    <property type="match status" value="1"/>
</dbReference>
<dbReference type="Pfam" id="PF08071">
    <property type="entry name" value="RS4NT"/>
    <property type="match status" value="1"/>
</dbReference>
<dbReference type="PIRSF" id="PIRSF002116">
    <property type="entry name" value="Ribosomal_S4"/>
    <property type="match status" value="1"/>
</dbReference>
<dbReference type="SMART" id="SM00363">
    <property type="entry name" value="S4"/>
    <property type="match status" value="1"/>
</dbReference>
<dbReference type="PROSITE" id="PS00528">
    <property type="entry name" value="RIBOSOMAL_S4E"/>
    <property type="match status" value="1"/>
</dbReference>
<dbReference type="PROSITE" id="PS50889">
    <property type="entry name" value="S4"/>
    <property type="match status" value="1"/>
</dbReference>
<comment type="function">
    <text evidence="1">Component of the small ribosomal subunit. The ribosome is a large ribonucleoprotein complex responsible for the synthesis of proteins in the cell.</text>
</comment>
<comment type="subunit">
    <text evidence="1">Component of the small ribosomal subunit.</text>
</comment>
<comment type="subcellular location">
    <subcellularLocation>
        <location evidence="1">Cytoplasm</location>
    </subcellularLocation>
</comment>
<comment type="similarity">
    <text evidence="2">Belongs to the eukaryotic ribosomal protein eS4 family.</text>
</comment>
<evidence type="ECO:0000250" key="1">
    <source>
        <dbReference type="UniProtKB" id="P62701"/>
    </source>
</evidence>
<evidence type="ECO:0000305" key="2"/>
<reference key="1">
    <citation type="submission" date="2006-03" db="EMBL/GenBank/DDBJ databases">
        <authorList>
            <consortium name="Sanger Xenopus tropicalis EST/cDNA project"/>
        </authorList>
    </citation>
    <scope>NUCLEOTIDE SEQUENCE [LARGE SCALE MRNA]</scope>
    <source>
        <tissue>Tadpole</tissue>
    </source>
</reference>
<reference key="2">
    <citation type="submission" date="2004-07" db="EMBL/GenBank/DDBJ databases">
        <authorList>
            <consortium name="NIH - Xenopus Gene Collection (XGC) project"/>
        </authorList>
    </citation>
    <scope>NUCLEOTIDE SEQUENCE [LARGE SCALE MRNA]</scope>
    <source>
        <tissue>Embryo</tissue>
        <tissue>Tadpole</tissue>
    </source>
</reference>
<proteinExistence type="evidence at transcript level"/>
<keyword id="KW-0963">Cytoplasm</keyword>
<keyword id="KW-1185">Reference proteome</keyword>
<keyword id="KW-0687">Ribonucleoprotein</keyword>
<keyword id="KW-0689">Ribosomal protein</keyword>
<keyword id="KW-0694">RNA-binding</keyword>
<keyword id="KW-0699">rRNA-binding</keyword>
<feature type="initiator methionine" description="Removed" evidence="1">
    <location>
        <position position="1"/>
    </location>
</feature>
<feature type="chain" id="PRO_0000130827" description="Small ribosomal subunit protein eS4">
    <location>
        <begin position="2"/>
        <end position="263"/>
    </location>
</feature>
<feature type="domain" description="S4 RNA-binding">
    <location>
        <begin position="42"/>
        <end position="104"/>
    </location>
</feature>
<gene>
    <name type="primary">rps4</name>
    <name type="synonym">rps4x</name>
    <name type="ORF">TTpA012h08.1</name>
</gene>
<protein>
    <recommendedName>
        <fullName evidence="2">Small ribosomal subunit protein eS4</fullName>
    </recommendedName>
    <alternativeName>
        <fullName>40S ribosomal protein S4</fullName>
    </alternativeName>
</protein>
<organism>
    <name type="scientific">Xenopus tropicalis</name>
    <name type="common">Western clawed frog</name>
    <name type="synonym">Silurana tropicalis</name>
    <dbReference type="NCBI Taxonomy" id="8364"/>
    <lineage>
        <taxon>Eukaryota</taxon>
        <taxon>Metazoa</taxon>
        <taxon>Chordata</taxon>
        <taxon>Craniata</taxon>
        <taxon>Vertebrata</taxon>
        <taxon>Euteleostomi</taxon>
        <taxon>Amphibia</taxon>
        <taxon>Batrachia</taxon>
        <taxon>Anura</taxon>
        <taxon>Pipoidea</taxon>
        <taxon>Pipidae</taxon>
        <taxon>Xenopodinae</taxon>
        <taxon>Xenopus</taxon>
        <taxon>Silurana</taxon>
    </lineage>
</organism>